<name>METK1_HORVU</name>
<comment type="function">
    <text evidence="5">Catalyzes the formation of S-adenosylmethionine from methionine and ATP. The reaction comprises two steps that are both catalyzed by the same enzyme: formation of S-adenosylmethionine (AdoMet) and triphosphate, and subsequent hydrolysis of the triphosphate.</text>
</comment>
<comment type="catalytic activity">
    <reaction evidence="5">
        <text>L-methionine + ATP + H2O = S-adenosyl-L-methionine + phosphate + diphosphate</text>
        <dbReference type="Rhea" id="RHEA:21080"/>
        <dbReference type="ChEBI" id="CHEBI:15377"/>
        <dbReference type="ChEBI" id="CHEBI:30616"/>
        <dbReference type="ChEBI" id="CHEBI:33019"/>
        <dbReference type="ChEBI" id="CHEBI:43474"/>
        <dbReference type="ChEBI" id="CHEBI:57844"/>
        <dbReference type="ChEBI" id="CHEBI:59789"/>
        <dbReference type="EC" id="2.5.1.6"/>
    </reaction>
</comment>
<comment type="cofactor">
    <cofactor evidence="5">
        <name>Mn(2+)</name>
        <dbReference type="ChEBI" id="CHEBI:29035"/>
    </cofactor>
    <cofactor evidence="5">
        <name>Mg(2+)</name>
        <dbReference type="ChEBI" id="CHEBI:18420"/>
    </cofactor>
    <cofactor evidence="5">
        <name>Co(2+)</name>
        <dbReference type="ChEBI" id="CHEBI:48828"/>
    </cofactor>
    <text evidence="3 5">Binds 2 divalent ions per subunit. The metal ions interact primarily with the substrate (By similarity). Can utilize magnesium, manganese or cobalt (in vitro) (By similarity).</text>
</comment>
<comment type="cofactor">
    <cofactor evidence="5">
        <name>K(+)</name>
        <dbReference type="ChEBI" id="CHEBI:29103"/>
    </cofactor>
    <text evidence="3">Binds 1 potassium ion per subunit. The potassium ion interacts primarily with the substrate (By similarity).</text>
</comment>
<comment type="pathway">
    <text evidence="5">Amino-acid biosynthesis; S-adenosyl-L-methionine biosynthesis; S-adenosyl-L-methionine from L-methionine: step 1/1.</text>
</comment>
<comment type="subunit">
    <text evidence="1">Homotetramer.</text>
</comment>
<comment type="subcellular location">
    <subcellularLocation>
        <location evidence="1">Cytoplasm</location>
    </subcellularLocation>
</comment>
<comment type="similarity">
    <text evidence="6">Belongs to the AdoMet synthase family.</text>
</comment>
<keyword id="KW-0067">ATP-binding</keyword>
<keyword id="KW-0170">Cobalt</keyword>
<keyword id="KW-0963">Cytoplasm</keyword>
<keyword id="KW-0460">Magnesium</keyword>
<keyword id="KW-0479">Metal-binding</keyword>
<keyword id="KW-0547">Nucleotide-binding</keyword>
<keyword id="KW-0554">One-carbon metabolism</keyword>
<keyword id="KW-0630">Potassium</keyword>
<keyword id="KW-0808">Transferase</keyword>
<evidence type="ECO:0000250" key="1"/>
<evidence type="ECO:0000250" key="2">
    <source>
        <dbReference type="UniProtKB" id="P0A817"/>
    </source>
</evidence>
<evidence type="ECO:0000250" key="3">
    <source>
        <dbReference type="UniProtKB" id="P13444"/>
    </source>
</evidence>
<evidence type="ECO:0000250" key="4">
    <source>
        <dbReference type="UniProtKB" id="Q00266"/>
    </source>
</evidence>
<evidence type="ECO:0000250" key="5">
    <source>
        <dbReference type="UniProtKB" id="Q96551"/>
    </source>
</evidence>
<evidence type="ECO:0000305" key="6"/>
<protein>
    <recommendedName>
        <fullName>S-adenosylmethionine synthase 1</fullName>
        <shortName>AdoMet synthase 1</shortName>
        <ecNumber evidence="5">2.5.1.6</ecNumber>
    </recommendedName>
    <alternativeName>
        <fullName>Methionine adenosyltransferase 1</fullName>
        <shortName>MAT 1</shortName>
    </alternativeName>
</protein>
<accession>P50299</accession>
<accession>Q4LB24</accession>
<reference key="1">
    <citation type="journal article" date="2005" name="Plant Mol. Biol.">
        <title>The methylation cycle and its possible functions in barley endosperm development.</title>
        <authorList>
            <person name="Radchuk V.V."/>
            <person name="Sreenivasulu N."/>
            <person name="Radchuk R.I."/>
            <person name="Wobus U."/>
            <person name="Weschke W."/>
        </authorList>
    </citation>
    <scope>NUCLEOTIDE SEQUENCE [MRNA]</scope>
    <source>
        <strain>cv. Barke</strain>
        <tissue>Seed</tissue>
    </source>
</reference>
<reference key="2">
    <citation type="submission" date="1995-08" db="EMBL/GenBank/DDBJ databases">
        <authorList>
            <person name="Mori S."/>
            <person name="Takizawa R."/>
        </authorList>
    </citation>
    <scope>NUCLEOTIDE SEQUENCE [MRNA]</scope>
</reference>
<reference key="3">
    <citation type="submission" date="1995-03" db="EMBL/GenBank/DDBJ databases">
        <authorList>
            <person name="Mori S."/>
            <person name="Takizawa R."/>
            <person name="Nakanishi H."/>
        </authorList>
    </citation>
    <scope>NUCLEOTIDE SEQUENCE [MRNA] OF 285-322</scope>
    <source>
        <tissue>Root</tissue>
        <tissue>Seedling</tissue>
    </source>
</reference>
<proteinExistence type="evidence at transcript level"/>
<dbReference type="EC" id="2.5.1.6" evidence="5"/>
<dbReference type="EMBL" id="AM039893">
    <property type="protein sequence ID" value="CAJ01702.1"/>
    <property type="molecule type" value="mRNA"/>
</dbReference>
<dbReference type="EMBL" id="D63835">
    <property type="protein sequence ID" value="BAA09895.1"/>
    <property type="molecule type" value="mRNA"/>
</dbReference>
<dbReference type="EMBL" id="D49655">
    <property type="protein sequence ID" value="BAA08531.1"/>
    <property type="molecule type" value="mRNA"/>
</dbReference>
<dbReference type="PIR" id="T06180">
    <property type="entry name" value="T06180"/>
</dbReference>
<dbReference type="SMR" id="P50299"/>
<dbReference type="UniPathway" id="UPA00315">
    <property type="reaction ID" value="UER00080"/>
</dbReference>
<dbReference type="ExpressionAtlas" id="P50299">
    <property type="expression patterns" value="baseline and differential"/>
</dbReference>
<dbReference type="GO" id="GO:0005737">
    <property type="term" value="C:cytoplasm"/>
    <property type="evidence" value="ECO:0007669"/>
    <property type="project" value="UniProtKB-SubCell"/>
</dbReference>
<dbReference type="GO" id="GO:0005524">
    <property type="term" value="F:ATP binding"/>
    <property type="evidence" value="ECO:0007669"/>
    <property type="project" value="UniProtKB-KW"/>
</dbReference>
<dbReference type="GO" id="GO:0046872">
    <property type="term" value="F:metal ion binding"/>
    <property type="evidence" value="ECO:0007669"/>
    <property type="project" value="UniProtKB-KW"/>
</dbReference>
<dbReference type="GO" id="GO:0004478">
    <property type="term" value="F:methionine adenosyltransferase activity"/>
    <property type="evidence" value="ECO:0007669"/>
    <property type="project" value="UniProtKB-EC"/>
</dbReference>
<dbReference type="GO" id="GO:0006730">
    <property type="term" value="P:one-carbon metabolic process"/>
    <property type="evidence" value="ECO:0007669"/>
    <property type="project" value="UniProtKB-KW"/>
</dbReference>
<dbReference type="GO" id="GO:0006556">
    <property type="term" value="P:S-adenosylmethionine biosynthetic process"/>
    <property type="evidence" value="ECO:0007669"/>
    <property type="project" value="UniProtKB-UniPathway"/>
</dbReference>
<dbReference type="CDD" id="cd18079">
    <property type="entry name" value="S-AdoMet_synt"/>
    <property type="match status" value="1"/>
</dbReference>
<dbReference type="FunFam" id="3.30.300.10:FF:000003">
    <property type="entry name" value="S-adenosylmethionine synthase"/>
    <property type="match status" value="1"/>
</dbReference>
<dbReference type="FunFam" id="3.30.300.10:FF:000004">
    <property type="entry name" value="S-adenosylmethionine synthase"/>
    <property type="match status" value="1"/>
</dbReference>
<dbReference type="FunFam" id="3.30.300.10:FF:000011">
    <property type="entry name" value="S-adenosylmethionine synthase"/>
    <property type="match status" value="1"/>
</dbReference>
<dbReference type="FunFam" id="3.30.300.10:FF:000021">
    <property type="entry name" value="S-adenosylmethionine synthetase 1"/>
    <property type="match status" value="1"/>
</dbReference>
<dbReference type="Gene3D" id="3.30.300.10">
    <property type="match status" value="3"/>
</dbReference>
<dbReference type="HAMAP" id="MF_00086">
    <property type="entry name" value="S_AdoMet_synth1"/>
    <property type="match status" value="1"/>
</dbReference>
<dbReference type="InterPro" id="IPR022631">
    <property type="entry name" value="ADOMET_SYNTHASE_CS"/>
</dbReference>
<dbReference type="InterPro" id="IPR022630">
    <property type="entry name" value="S-AdoMet_synt_C"/>
</dbReference>
<dbReference type="InterPro" id="IPR022629">
    <property type="entry name" value="S-AdoMet_synt_central"/>
</dbReference>
<dbReference type="InterPro" id="IPR022628">
    <property type="entry name" value="S-AdoMet_synt_N"/>
</dbReference>
<dbReference type="InterPro" id="IPR002133">
    <property type="entry name" value="S-AdoMet_synthetase"/>
</dbReference>
<dbReference type="InterPro" id="IPR022636">
    <property type="entry name" value="S-AdoMet_synthetase_sfam"/>
</dbReference>
<dbReference type="NCBIfam" id="TIGR01034">
    <property type="entry name" value="metK"/>
    <property type="match status" value="1"/>
</dbReference>
<dbReference type="PANTHER" id="PTHR11964">
    <property type="entry name" value="S-ADENOSYLMETHIONINE SYNTHETASE"/>
    <property type="match status" value="1"/>
</dbReference>
<dbReference type="Pfam" id="PF02773">
    <property type="entry name" value="S-AdoMet_synt_C"/>
    <property type="match status" value="1"/>
</dbReference>
<dbReference type="Pfam" id="PF02772">
    <property type="entry name" value="S-AdoMet_synt_M"/>
    <property type="match status" value="1"/>
</dbReference>
<dbReference type="Pfam" id="PF00438">
    <property type="entry name" value="S-AdoMet_synt_N"/>
    <property type="match status" value="1"/>
</dbReference>
<dbReference type="PIRSF" id="PIRSF000497">
    <property type="entry name" value="MAT"/>
    <property type="match status" value="1"/>
</dbReference>
<dbReference type="SUPFAM" id="SSF55973">
    <property type="entry name" value="S-adenosylmethionine synthetase"/>
    <property type="match status" value="3"/>
</dbReference>
<dbReference type="PROSITE" id="PS00376">
    <property type="entry name" value="ADOMET_SYNTHASE_1"/>
    <property type="match status" value="1"/>
</dbReference>
<dbReference type="PROSITE" id="PS00377">
    <property type="entry name" value="ADOMET_SYNTHASE_2"/>
    <property type="match status" value="1"/>
</dbReference>
<organism>
    <name type="scientific">Hordeum vulgare</name>
    <name type="common">Barley</name>
    <dbReference type="NCBI Taxonomy" id="4513"/>
    <lineage>
        <taxon>Eukaryota</taxon>
        <taxon>Viridiplantae</taxon>
        <taxon>Streptophyta</taxon>
        <taxon>Embryophyta</taxon>
        <taxon>Tracheophyta</taxon>
        <taxon>Spermatophyta</taxon>
        <taxon>Magnoliopsida</taxon>
        <taxon>Liliopsida</taxon>
        <taxon>Poales</taxon>
        <taxon>Poaceae</taxon>
        <taxon>BOP clade</taxon>
        <taxon>Pooideae</taxon>
        <taxon>Triticodae</taxon>
        <taxon>Triticeae</taxon>
        <taxon>Hordeinae</taxon>
        <taxon>Hordeum</taxon>
    </lineage>
</organism>
<gene>
    <name type="primary">SAM1</name>
</gene>
<sequence>MAAETFLFTSESVNEGHPDKLCDQVSDAVLDACLAQDPDSKVACETCTKTNMVMVFGEITTKATVDYEKIVRDTCRDIGFISDDVGLDADHCKVLVNIEQQSPDIAQGVHGHFTKRPEEVGAGDQGIMFGYATDETPELMPLTHMLATKLGARLTEVRKNGTCAWLRPDGKTQVTIEYLNEGGAMVPVRVHTVLISTQHDETVTNDEIAADLKEHVIKPVIPGKYLDENTIFHLNPSGRFVIGGPHGDAGLTARKIIIDTYGGWGAHGGGAFSGKDPTKVDRSGAYIARQAAKSIIASGLARRCIVQISYAIGVPEPLSVFVDSYGTGKIPDREILKLVKENFDFRPGMITINLDLKKGGNRFIKTAAYGHFGRDDADFTWEVVKPLKFDKASA</sequence>
<feature type="chain" id="PRO_0000174463" description="S-adenosylmethionine synthase 1">
    <location>
        <begin position="1"/>
        <end position="394"/>
    </location>
</feature>
<feature type="binding site" evidence="3">
    <location>
        <position position="11"/>
    </location>
    <ligand>
        <name>Mg(2+)</name>
        <dbReference type="ChEBI" id="CHEBI:18420"/>
    </ligand>
</feature>
<feature type="binding site" description="in other chain" evidence="4">
    <location>
        <position position="17"/>
    </location>
    <ligand>
        <name>ATP</name>
        <dbReference type="ChEBI" id="CHEBI:30616"/>
        <note>ligand shared between two neighboring subunits</note>
    </ligand>
</feature>
<feature type="binding site" evidence="2">
    <location>
        <position position="45"/>
    </location>
    <ligand>
        <name>K(+)</name>
        <dbReference type="ChEBI" id="CHEBI:29103"/>
    </ligand>
</feature>
<feature type="binding site" description="in other chain" evidence="2">
    <location>
        <position position="58"/>
    </location>
    <ligand>
        <name>L-methionine</name>
        <dbReference type="ChEBI" id="CHEBI:57844"/>
        <note>ligand shared between two neighboring subunits</note>
    </ligand>
</feature>
<feature type="binding site" description="in other chain" evidence="2">
    <location>
        <position position="101"/>
    </location>
    <ligand>
        <name>L-methionine</name>
        <dbReference type="ChEBI" id="CHEBI:57844"/>
        <note>ligand shared between two neighboring subunits</note>
    </ligand>
</feature>
<feature type="binding site" description="in other chain" evidence="4">
    <location>
        <begin position="169"/>
        <end position="171"/>
    </location>
    <ligand>
        <name>ATP</name>
        <dbReference type="ChEBI" id="CHEBI:30616"/>
        <note>ligand shared between two neighboring subunits</note>
    </ligand>
</feature>
<feature type="binding site" description="in other chain" evidence="4">
    <location>
        <begin position="237"/>
        <end position="240"/>
    </location>
    <ligand>
        <name>ATP</name>
        <dbReference type="ChEBI" id="CHEBI:30616"/>
        <note>ligand shared between two neighboring subunits</note>
    </ligand>
</feature>
<feature type="binding site" description="in other chain" evidence="4">
    <location>
        <position position="248"/>
    </location>
    <ligand>
        <name>ATP</name>
        <dbReference type="ChEBI" id="CHEBI:30616"/>
        <note>ligand shared between two neighboring subunits</note>
    </ligand>
</feature>
<feature type="binding site" evidence="2">
    <location>
        <position position="248"/>
    </location>
    <ligand>
        <name>L-methionine</name>
        <dbReference type="ChEBI" id="CHEBI:57844"/>
        <note>ligand shared between two neighboring subunits</note>
    </ligand>
</feature>
<feature type="binding site" description="in other chain" evidence="2">
    <location>
        <begin position="254"/>
        <end position="255"/>
    </location>
    <ligand>
        <name>ATP</name>
        <dbReference type="ChEBI" id="CHEBI:30616"/>
        <note>ligand shared between two neighboring subunits</note>
    </ligand>
</feature>
<feature type="binding site" evidence="2">
    <location>
        <position position="271"/>
    </location>
    <ligand>
        <name>ATP</name>
        <dbReference type="ChEBI" id="CHEBI:30616"/>
        <note>ligand shared between two neighboring subunits</note>
    </ligand>
</feature>
<feature type="binding site" evidence="2">
    <location>
        <position position="275"/>
    </location>
    <ligand>
        <name>ATP</name>
        <dbReference type="ChEBI" id="CHEBI:30616"/>
        <note>ligand shared between two neighboring subunits</note>
    </ligand>
</feature>
<feature type="binding site" evidence="3">
    <location>
        <position position="279"/>
    </location>
    <ligand>
        <name>ATP</name>
        <dbReference type="ChEBI" id="CHEBI:30616"/>
        <note>ligand shared between two neighboring subunits</note>
    </ligand>
</feature>
<feature type="binding site" description="in other chain" evidence="2">
    <location>
        <position position="279"/>
    </location>
    <ligand>
        <name>L-methionine</name>
        <dbReference type="ChEBI" id="CHEBI:57844"/>
        <note>ligand shared between two neighboring subunits</note>
    </ligand>
</feature>
<feature type="sequence conflict" description="In Ref. 1; CAJ01702." evidence="6" ref="1">
    <original>A</original>
    <variation>G</variation>
    <location>
        <position position="253"/>
    </location>
</feature>
<feature type="sequence conflict" description="In Ref. 1; CAJ01702." evidence="6" ref="1">
    <original>T</original>
    <variation>S</variation>
    <location>
        <position position="351"/>
    </location>
</feature>